<accession>Q752B6</accession>
<organism>
    <name type="scientific">Eremothecium gossypii (strain ATCC 10895 / CBS 109.51 / FGSC 9923 / NRRL Y-1056)</name>
    <name type="common">Yeast</name>
    <name type="synonym">Ashbya gossypii</name>
    <dbReference type="NCBI Taxonomy" id="284811"/>
    <lineage>
        <taxon>Eukaryota</taxon>
        <taxon>Fungi</taxon>
        <taxon>Dikarya</taxon>
        <taxon>Ascomycota</taxon>
        <taxon>Saccharomycotina</taxon>
        <taxon>Saccharomycetes</taxon>
        <taxon>Saccharomycetales</taxon>
        <taxon>Saccharomycetaceae</taxon>
        <taxon>Eremothecium</taxon>
    </lineage>
</organism>
<gene>
    <name type="primary">CWC23</name>
    <name type="ordered locus">AFR659W</name>
</gene>
<sequence>MSADALKDVIGGGKDLYALLEVSISSPEELEAVDAAQLRAQFRRLALRYHPDKRRDDTQQNDKFVSVQKAYDILSNSSLRATYNRWLSCRLFGDPERRRLVRELHQREQLQVRQKEPMDKDIQNIQSYGQLLRKMRHLRIPYGDWRPNTSISRDSTLVETCTLRLLLRQNSTTNSKSSMLQLFQRAKLHIVDLYFSSRNVDTENDLVLYAVMPDVDTMLDLLNNWAVKPPLSEHILQVQPRVHTDYFHFKTDISLDKTITEAIDADNQYMSSF</sequence>
<evidence type="ECO:0000250" key="1"/>
<evidence type="ECO:0000255" key="2">
    <source>
        <dbReference type="PROSITE-ProRule" id="PRU00286"/>
    </source>
</evidence>
<evidence type="ECO:0000305" key="3"/>
<reference key="1">
    <citation type="journal article" date="2004" name="Science">
        <title>The Ashbya gossypii genome as a tool for mapping the ancient Saccharomyces cerevisiae genome.</title>
        <authorList>
            <person name="Dietrich F.S."/>
            <person name="Voegeli S."/>
            <person name="Brachat S."/>
            <person name="Lerch A."/>
            <person name="Gates K."/>
            <person name="Steiner S."/>
            <person name="Mohr C."/>
            <person name="Poehlmann R."/>
            <person name="Luedi P."/>
            <person name="Choi S."/>
            <person name="Wing R.A."/>
            <person name="Flavier A."/>
            <person name="Gaffney T.D."/>
            <person name="Philippsen P."/>
        </authorList>
    </citation>
    <scope>NUCLEOTIDE SEQUENCE [LARGE SCALE GENOMIC DNA]</scope>
    <source>
        <strain>ATCC 10895 / CBS 109.51 / FGSC 9923 / NRRL Y-1056</strain>
    </source>
</reference>
<reference key="2">
    <citation type="journal article" date="2013" name="G3 (Bethesda)">
        <title>Genomes of Ashbya fungi isolated from insects reveal four mating-type loci, numerous translocations, lack of transposons, and distinct gene duplications.</title>
        <authorList>
            <person name="Dietrich F.S."/>
            <person name="Voegeli S."/>
            <person name="Kuo S."/>
            <person name="Philippsen P."/>
        </authorList>
    </citation>
    <scope>GENOME REANNOTATION</scope>
    <source>
        <strain>ATCC 10895 / CBS 109.51 / FGSC 9923 / NRRL Y-1056</strain>
    </source>
</reference>
<keyword id="KW-0143">Chaperone</keyword>
<keyword id="KW-0963">Cytoplasm</keyword>
<keyword id="KW-0507">mRNA processing</keyword>
<keyword id="KW-0508">mRNA splicing</keyword>
<keyword id="KW-0539">Nucleus</keyword>
<keyword id="KW-1185">Reference proteome</keyword>
<keyword id="KW-0747">Spliceosome</keyword>
<feature type="chain" id="PRO_0000071125" description="Pre-mRNA-splicing factor CWC23">
    <location>
        <begin position="1"/>
        <end position="273"/>
    </location>
</feature>
<feature type="domain" description="J" evidence="2">
    <location>
        <begin position="15"/>
        <end position="87"/>
    </location>
</feature>
<dbReference type="EMBL" id="AE016819">
    <property type="protein sequence ID" value="AAS54031.1"/>
    <property type="molecule type" value="Genomic_DNA"/>
</dbReference>
<dbReference type="RefSeq" id="NP_986207.1">
    <property type="nucleotide sequence ID" value="NM_212343.1"/>
</dbReference>
<dbReference type="SMR" id="Q752B6"/>
<dbReference type="FunCoup" id="Q752B6">
    <property type="interactions" value="154"/>
</dbReference>
<dbReference type="STRING" id="284811.Q752B6"/>
<dbReference type="EnsemblFungi" id="AAS54031">
    <property type="protein sequence ID" value="AAS54031"/>
    <property type="gene ID" value="AGOS_AFR659W"/>
</dbReference>
<dbReference type="GeneID" id="4622496"/>
<dbReference type="KEGG" id="ago:AGOS_AFR659W"/>
<dbReference type="eggNOG" id="KOG0716">
    <property type="taxonomic scope" value="Eukaryota"/>
</dbReference>
<dbReference type="HOGENOM" id="CLU_063717_0_0_1"/>
<dbReference type="InParanoid" id="Q752B6"/>
<dbReference type="OMA" id="KHFKLPY"/>
<dbReference type="OrthoDB" id="436519at2759"/>
<dbReference type="Proteomes" id="UP000000591">
    <property type="component" value="Chromosome VI"/>
</dbReference>
<dbReference type="GO" id="GO:0005783">
    <property type="term" value="C:endoplasmic reticulum"/>
    <property type="evidence" value="ECO:0000318"/>
    <property type="project" value="GO_Central"/>
</dbReference>
<dbReference type="GO" id="GO:0005681">
    <property type="term" value="C:spliceosomal complex"/>
    <property type="evidence" value="ECO:0007669"/>
    <property type="project" value="UniProtKB-KW"/>
</dbReference>
<dbReference type="GO" id="GO:0051787">
    <property type="term" value="F:misfolded protein binding"/>
    <property type="evidence" value="ECO:0000318"/>
    <property type="project" value="GO_Central"/>
</dbReference>
<dbReference type="GO" id="GO:0051087">
    <property type="term" value="F:protein-folding chaperone binding"/>
    <property type="evidence" value="ECO:0000318"/>
    <property type="project" value="GO_Central"/>
</dbReference>
<dbReference type="GO" id="GO:0036503">
    <property type="term" value="P:ERAD pathway"/>
    <property type="evidence" value="ECO:0000318"/>
    <property type="project" value="GO_Central"/>
</dbReference>
<dbReference type="GO" id="GO:0006397">
    <property type="term" value="P:mRNA processing"/>
    <property type="evidence" value="ECO:0007669"/>
    <property type="project" value="UniProtKB-KW"/>
</dbReference>
<dbReference type="GO" id="GO:0008380">
    <property type="term" value="P:RNA splicing"/>
    <property type="evidence" value="ECO:0007669"/>
    <property type="project" value="UniProtKB-KW"/>
</dbReference>
<dbReference type="CDD" id="cd06257">
    <property type="entry name" value="DnaJ"/>
    <property type="match status" value="1"/>
</dbReference>
<dbReference type="Gene3D" id="1.10.287.110">
    <property type="entry name" value="DnaJ domain"/>
    <property type="match status" value="1"/>
</dbReference>
<dbReference type="InterPro" id="IPR001623">
    <property type="entry name" value="DnaJ_domain"/>
</dbReference>
<dbReference type="InterPro" id="IPR018253">
    <property type="entry name" value="DnaJ_domain_CS"/>
</dbReference>
<dbReference type="InterPro" id="IPR051948">
    <property type="entry name" value="Hsp70_co-chaperone_J-domain"/>
</dbReference>
<dbReference type="InterPro" id="IPR036869">
    <property type="entry name" value="J_dom_sf"/>
</dbReference>
<dbReference type="PANTHER" id="PTHR44360">
    <property type="entry name" value="DNAJ HOMOLOG SUBFAMILY B MEMBER 9"/>
    <property type="match status" value="1"/>
</dbReference>
<dbReference type="PANTHER" id="PTHR44360:SF1">
    <property type="entry name" value="DNAJ HOMOLOG SUBFAMILY B MEMBER 9"/>
    <property type="match status" value="1"/>
</dbReference>
<dbReference type="Pfam" id="PF00226">
    <property type="entry name" value="DnaJ"/>
    <property type="match status" value="1"/>
</dbReference>
<dbReference type="PRINTS" id="PR00625">
    <property type="entry name" value="JDOMAIN"/>
</dbReference>
<dbReference type="SMART" id="SM00271">
    <property type="entry name" value="DnaJ"/>
    <property type="match status" value="1"/>
</dbReference>
<dbReference type="SUPFAM" id="SSF46565">
    <property type="entry name" value="Chaperone J-domain"/>
    <property type="match status" value="1"/>
</dbReference>
<dbReference type="PROSITE" id="PS00636">
    <property type="entry name" value="DNAJ_1"/>
    <property type="match status" value="1"/>
</dbReference>
<dbReference type="PROSITE" id="PS50076">
    <property type="entry name" value="DNAJ_2"/>
    <property type="match status" value="1"/>
</dbReference>
<protein>
    <recommendedName>
        <fullName>Pre-mRNA-splicing factor CWC23</fullName>
    </recommendedName>
</protein>
<comment type="function">
    <text evidence="1">Involved in pre-mRNA splicing. May be involved in endoplasmic reticulum-associated protein degradation (ERAD) and required for growth at low and high temperatures (By similarity).</text>
</comment>
<comment type="subunit">
    <text evidence="1">Associated with the spliceosome.</text>
</comment>
<comment type="subcellular location">
    <subcellularLocation>
        <location evidence="1">Cytoplasm</location>
    </subcellularLocation>
    <subcellularLocation>
        <location evidence="1">Nucleus</location>
    </subcellularLocation>
</comment>
<comment type="similarity">
    <text evidence="3">Belongs to the DnaJ family.</text>
</comment>
<proteinExistence type="inferred from homology"/>
<name>CWC23_EREGS</name>